<evidence type="ECO:0000250" key="1"/>
<evidence type="ECO:0000256" key="2">
    <source>
        <dbReference type="SAM" id="MobiDB-lite"/>
    </source>
</evidence>
<evidence type="ECO:0000269" key="3">
    <source>
    </source>
</evidence>
<evidence type="ECO:0000305" key="4"/>
<accession>Q9SR33</accession>
<proteinExistence type="evidence at transcript level"/>
<dbReference type="EMBL" id="AC011436">
    <property type="protein sequence ID" value="AAF14027.1"/>
    <property type="molecule type" value="Genomic_DNA"/>
</dbReference>
<dbReference type="EMBL" id="CP002686">
    <property type="protein sequence ID" value="AEE74748.1"/>
    <property type="molecule type" value="Genomic_DNA"/>
</dbReference>
<dbReference type="EMBL" id="AY062703">
    <property type="protein sequence ID" value="AAL32781.1"/>
    <property type="molecule type" value="mRNA"/>
</dbReference>
<dbReference type="EMBL" id="AY093373">
    <property type="protein sequence ID" value="AAM13372.1"/>
    <property type="molecule type" value="mRNA"/>
</dbReference>
<dbReference type="RefSeq" id="NP_187541.1">
    <property type="nucleotide sequence ID" value="NM_111764.4"/>
</dbReference>
<dbReference type="SMR" id="Q9SR33"/>
<dbReference type="FunCoup" id="Q9SR33">
    <property type="interactions" value="559"/>
</dbReference>
<dbReference type="STRING" id="3702.Q9SR33"/>
<dbReference type="iPTMnet" id="Q9SR33"/>
<dbReference type="PaxDb" id="3702-AT3G09300.1"/>
<dbReference type="ProteomicsDB" id="248646"/>
<dbReference type="EnsemblPlants" id="AT3G09300.1">
    <property type="protein sequence ID" value="AT3G09300.1"/>
    <property type="gene ID" value="AT3G09300"/>
</dbReference>
<dbReference type="GeneID" id="820086"/>
<dbReference type="Gramene" id="AT3G09300.1">
    <property type="protein sequence ID" value="AT3G09300.1"/>
    <property type="gene ID" value="AT3G09300"/>
</dbReference>
<dbReference type="KEGG" id="ath:AT3G09300"/>
<dbReference type="Araport" id="AT3G09300"/>
<dbReference type="TAIR" id="AT3G09300">
    <property type="gene designation" value="ORP3B"/>
</dbReference>
<dbReference type="eggNOG" id="KOG1737">
    <property type="taxonomic scope" value="Eukaryota"/>
</dbReference>
<dbReference type="HOGENOM" id="CLU_007105_6_0_1"/>
<dbReference type="InParanoid" id="Q9SR33"/>
<dbReference type="OMA" id="RPSNCNE"/>
<dbReference type="OrthoDB" id="14833at2759"/>
<dbReference type="PhylomeDB" id="Q9SR33"/>
<dbReference type="PRO" id="PR:Q9SR33"/>
<dbReference type="Proteomes" id="UP000006548">
    <property type="component" value="Chromosome 3"/>
</dbReference>
<dbReference type="ExpressionAtlas" id="Q9SR33">
    <property type="expression patterns" value="baseline and differential"/>
</dbReference>
<dbReference type="GO" id="GO:0008289">
    <property type="term" value="F:lipid binding"/>
    <property type="evidence" value="ECO:0007669"/>
    <property type="project" value="UniProtKB-KW"/>
</dbReference>
<dbReference type="GO" id="GO:0006869">
    <property type="term" value="P:lipid transport"/>
    <property type="evidence" value="ECO:0007669"/>
    <property type="project" value="UniProtKB-KW"/>
</dbReference>
<dbReference type="FunFam" id="3.30.70.3490:FF:000008">
    <property type="entry name" value="Oxysterol-binding protein-related protein 3C"/>
    <property type="match status" value="1"/>
</dbReference>
<dbReference type="FunFam" id="2.40.160.120:FF:000009">
    <property type="entry name" value="oxysterol-binding protein-related protein 3C"/>
    <property type="match status" value="1"/>
</dbReference>
<dbReference type="Gene3D" id="2.40.160.120">
    <property type="match status" value="1"/>
</dbReference>
<dbReference type="Gene3D" id="3.30.70.3490">
    <property type="match status" value="1"/>
</dbReference>
<dbReference type="InterPro" id="IPR037239">
    <property type="entry name" value="OSBP_sf"/>
</dbReference>
<dbReference type="InterPro" id="IPR000648">
    <property type="entry name" value="Oxysterol-bd"/>
</dbReference>
<dbReference type="InterPro" id="IPR018494">
    <property type="entry name" value="Oxysterol-bd_CS"/>
</dbReference>
<dbReference type="PANTHER" id="PTHR10972">
    <property type="entry name" value="OXYSTEROL-BINDING PROTEIN-RELATED"/>
    <property type="match status" value="1"/>
</dbReference>
<dbReference type="PANTHER" id="PTHR10972:SF164">
    <property type="entry name" value="OXYSTEROL-BINDING PROTEIN-RELATED PROTEIN 3B"/>
    <property type="match status" value="1"/>
</dbReference>
<dbReference type="Pfam" id="PF01237">
    <property type="entry name" value="Oxysterol_BP"/>
    <property type="match status" value="1"/>
</dbReference>
<dbReference type="SUPFAM" id="SSF144000">
    <property type="entry name" value="Oxysterol-binding protein-like"/>
    <property type="match status" value="1"/>
</dbReference>
<dbReference type="PROSITE" id="PS01013">
    <property type="entry name" value="OSBP"/>
    <property type="match status" value="1"/>
</dbReference>
<sequence>MAPNDPKKAVGGGGSGFFASLASSISNLGSAMTKSVNGLVPYEGLEVINPEGSTDDAEEEASRGRWKQEDRDGYWKMMQKYIGSDVTSMVTLPVIIFEPMTMLQKMAELMEYSHLLDMADKTEDPYLRMVYASSWAISVYYAFQRTWKPFNPILGETYEMANYNGVNFISEQVSHHPPMSAGHAENEHFTYDCTSKLKTKFLGNSIDVYPVGRTRVTLKRDGVVLDLVPPLTKVHNLIFGRTWVDSPGEMIMTNQTTGDKVVLYFQPCGWFGSGRYEVDGYVYNASEEPKILMTGKWNESMSYQPCDGEGEPLPGTELKEVWKLADVPKDDKYQYTHFAHKINSFDTAPKKLLPSDSRLRPDRYALEMGDMSKSGYEKSSMEERQRAEKRTREEKGQAFTPKWFDVTEEVTATPWGDLEVYQFNGKYSEHRAAADNSEDNTDPKSIQFNPWQFQDLST</sequence>
<reference key="1">
    <citation type="journal article" date="2000" name="Nature">
        <title>Sequence and analysis of chromosome 3 of the plant Arabidopsis thaliana.</title>
        <authorList>
            <person name="Salanoubat M."/>
            <person name="Lemcke K."/>
            <person name="Rieger M."/>
            <person name="Ansorge W."/>
            <person name="Unseld M."/>
            <person name="Fartmann B."/>
            <person name="Valle G."/>
            <person name="Bloecker H."/>
            <person name="Perez-Alonso M."/>
            <person name="Obermaier B."/>
            <person name="Delseny M."/>
            <person name="Boutry M."/>
            <person name="Grivell L.A."/>
            <person name="Mache R."/>
            <person name="Puigdomenech P."/>
            <person name="De Simone V."/>
            <person name="Choisne N."/>
            <person name="Artiguenave F."/>
            <person name="Robert C."/>
            <person name="Brottier P."/>
            <person name="Wincker P."/>
            <person name="Cattolico L."/>
            <person name="Weissenbach J."/>
            <person name="Saurin W."/>
            <person name="Quetier F."/>
            <person name="Schaefer M."/>
            <person name="Mueller-Auer S."/>
            <person name="Gabel C."/>
            <person name="Fuchs M."/>
            <person name="Benes V."/>
            <person name="Wurmbach E."/>
            <person name="Drzonek H."/>
            <person name="Erfle H."/>
            <person name="Jordan N."/>
            <person name="Bangert S."/>
            <person name="Wiedelmann R."/>
            <person name="Kranz H."/>
            <person name="Voss H."/>
            <person name="Holland R."/>
            <person name="Brandt P."/>
            <person name="Nyakatura G."/>
            <person name="Vezzi A."/>
            <person name="D'Angelo M."/>
            <person name="Pallavicini A."/>
            <person name="Toppo S."/>
            <person name="Simionati B."/>
            <person name="Conrad A."/>
            <person name="Hornischer K."/>
            <person name="Kauer G."/>
            <person name="Loehnert T.-H."/>
            <person name="Nordsiek G."/>
            <person name="Reichelt J."/>
            <person name="Scharfe M."/>
            <person name="Schoen O."/>
            <person name="Bargues M."/>
            <person name="Terol J."/>
            <person name="Climent J."/>
            <person name="Navarro P."/>
            <person name="Collado C."/>
            <person name="Perez-Perez A."/>
            <person name="Ottenwaelder B."/>
            <person name="Duchemin D."/>
            <person name="Cooke R."/>
            <person name="Laudie M."/>
            <person name="Berger-Llauro C."/>
            <person name="Purnelle B."/>
            <person name="Masuy D."/>
            <person name="de Haan M."/>
            <person name="Maarse A.C."/>
            <person name="Alcaraz J.-P."/>
            <person name="Cottet A."/>
            <person name="Casacuberta E."/>
            <person name="Monfort A."/>
            <person name="Argiriou A."/>
            <person name="Flores M."/>
            <person name="Liguori R."/>
            <person name="Vitale D."/>
            <person name="Mannhaupt G."/>
            <person name="Haase D."/>
            <person name="Schoof H."/>
            <person name="Rudd S."/>
            <person name="Zaccaria P."/>
            <person name="Mewes H.-W."/>
            <person name="Mayer K.F.X."/>
            <person name="Kaul S."/>
            <person name="Town C.D."/>
            <person name="Koo H.L."/>
            <person name="Tallon L.J."/>
            <person name="Jenkins J."/>
            <person name="Rooney T."/>
            <person name="Rizzo M."/>
            <person name="Walts A."/>
            <person name="Utterback T."/>
            <person name="Fujii C.Y."/>
            <person name="Shea T.P."/>
            <person name="Creasy T.H."/>
            <person name="Haas B."/>
            <person name="Maiti R."/>
            <person name="Wu D."/>
            <person name="Peterson J."/>
            <person name="Van Aken S."/>
            <person name="Pai G."/>
            <person name="Militscher J."/>
            <person name="Sellers P."/>
            <person name="Gill J.E."/>
            <person name="Feldblyum T.V."/>
            <person name="Preuss D."/>
            <person name="Lin X."/>
            <person name="Nierman W.C."/>
            <person name="Salzberg S.L."/>
            <person name="White O."/>
            <person name="Venter J.C."/>
            <person name="Fraser C.M."/>
            <person name="Kaneko T."/>
            <person name="Nakamura Y."/>
            <person name="Sato S."/>
            <person name="Kato T."/>
            <person name="Asamizu E."/>
            <person name="Sasamoto S."/>
            <person name="Kimura T."/>
            <person name="Idesawa K."/>
            <person name="Kawashima K."/>
            <person name="Kishida Y."/>
            <person name="Kiyokawa C."/>
            <person name="Kohara M."/>
            <person name="Matsumoto M."/>
            <person name="Matsuno A."/>
            <person name="Muraki A."/>
            <person name="Nakayama S."/>
            <person name="Nakazaki N."/>
            <person name="Shinpo S."/>
            <person name="Takeuchi C."/>
            <person name="Wada T."/>
            <person name="Watanabe A."/>
            <person name="Yamada M."/>
            <person name="Yasuda M."/>
            <person name="Tabata S."/>
        </authorList>
    </citation>
    <scope>NUCLEOTIDE SEQUENCE [LARGE SCALE GENOMIC DNA]</scope>
    <source>
        <strain>cv. Columbia</strain>
    </source>
</reference>
<reference key="2">
    <citation type="journal article" date="2017" name="Plant J.">
        <title>Araport11: a complete reannotation of the Arabidopsis thaliana reference genome.</title>
        <authorList>
            <person name="Cheng C.Y."/>
            <person name="Krishnakumar V."/>
            <person name="Chan A.P."/>
            <person name="Thibaud-Nissen F."/>
            <person name="Schobel S."/>
            <person name="Town C.D."/>
        </authorList>
    </citation>
    <scope>GENOME REANNOTATION</scope>
    <source>
        <strain>cv. Columbia</strain>
    </source>
</reference>
<reference key="3">
    <citation type="journal article" date="2003" name="Science">
        <title>Empirical analysis of transcriptional activity in the Arabidopsis genome.</title>
        <authorList>
            <person name="Yamada K."/>
            <person name="Lim J."/>
            <person name="Dale J.M."/>
            <person name="Chen H."/>
            <person name="Shinn P."/>
            <person name="Palm C.J."/>
            <person name="Southwick A.M."/>
            <person name="Wu H.C."/>
            <person name="Kim C.J."/>
            <person name="Nguyen M."/>
            <person name="Pham P.K."/>
            <person name="Cheuk R.F."/>
            <person name="Karlin-Newmann G."/>
            <person name="Liu S.X."/>
            <person name="Lam B."/>
            <person name="Sakano H."/>
            <person name="Wu T."/>
            <person name="Yu G."/>
            <person name="Miranda M."/>
            <person name="Quach H.L."/>
            <person name="Tripp M."/>
            <person name="Chang C.H."/>
            <person name="Lee J.M."/>
            <person name="Toriumi M.J."/>
            <person name="Chan M.M."/>
            <person name="Tang C.C."/>
            <person name="Onodera C.S."/>
            <person name="Deng J.M."/>
            <person name="Akiyama K."/>
            <person name="Ansari Y."/>
            <person name="Arakawa T."/>
            <person name="Banh J."/>
            <person name="Banno F."/>
            <person name="Bowser L."/>
            <person name="Brooks S.Y."/>
            <person name="Carninci P."/>
            <person name="Chao Q."/>
            <person name="Choy N."/>
            <person name="Enju A."/>
            <person name="Goldsmith A.D."/>
            <person name="Gurjal M."/>
            <person name="Hansen N.F."/>
            <person name="Hayashizaki Y."/>
            <person name="Johnson-Hopson C."/>
            <person name="Hsuan V.W."/>
            <person name="Iida K."/>
            <person name="Karnes M."/>
            <person name="Khan S."/>
            <person name="Koesema E."/>
            <person name="Ishida J."/>
            <person name="Jiang P.X."/>
            <person name="Jones T."/>
            <person name="Kawai J."/>
            <person name="Kamiya A."/>
            <person name="Meyers C."/>
            <person name="Nakajima M."/>
            <person name="Narusaka M."/>
            <person name="Seki M."/>
            <person name="Sakurai T."/>
            <person name="Satou M."/>
            <person name="Tamse R."/>
            <person name="Vaysberg M."/>
            <person name="Wallender E.K."/>
            <person name="Wong C."/>
            <person name="Yamamura Y."/>
            <person name="Yuan S."/>
            <person name="Shinozaki K."/>
            <person name="Davis R.W."/>
            <person name="Theologis A."/>
            <person name="Ecker J.R."/>
        </authorList>
    </citation>
    <scope>NUCLEOTIDE SEQUENCE [LARGE SCALE MRNA]</scope>
    <source>
        <strain>cv. Columbia</strain>
    </source>
</reference>
<reference key="4">
    <citation type="journal article" date="2006" name="Plant Mol. Biol.">
        <title>Identification and characterization of PiORP1, a Petunia oxysterol-binding-protein related protein involved in receptor-kinase mediated signaling in pollen, and analysis of the ORP gene family in Arabidopsis.</title>
        <authorList>
            <person name="Skirpan A.L."/>
            <person name="Dowd P.E."/>
            <person name="Sijacic P."/>
            <person name="Jaworski C.J."/>
            <person name="Gilroy S."/>
            <person name="Kao T.H."/>
        </authorList>
    </citation>
    <scope>TISSUE SPECIFICITY</scope>
    <scope>GENE FAMILY</scope>
    <scope>NOMENCLATURE</scope>
</reference>
<keyword id="KW-0445">Lipid transport</keyword>
<keyword id="KW-0446">Lipid-binding</keyword>
<keyword id="KW-1185">Reference proteome</keyword>
<keyword id="KW-0813">Transport</keyword>
<protein>
    <recommendedName>
        <fullName>Oxysterol-binding protein-related protein 3B</fullName>
    </recommendedName>
    <alternativeName>
        <fullName>OSBP-related protein 3B</fullName>
    </alternativeName>
</protein>
<name>ORP3B_ARATH</name>
<gene>
    <name type="primary">ORP3B</name>
    <name type="ordered locus">At3g09300</name>
    <name type="ORF">F3L24.17</name>
</gene>
<feature type="chain" id="PRO_0000402163" description="Oxysterol-binding protein-related protein 3B">
    <location>
        <begin position="1"/>
        <end position="458"/>
    </location>
</feature>
<feature type="region of interest" description="Disordered" evidence="2">
    <location>
        <begin position="47"/>
        <end position="66"/>
    </location>
</feature>
<feature type="region of interest" description="Disordered" evidence="2">
    <location>
        <begin position="370"/>
        <end position="401"/>
    </location>
</feature>
<feature type="region of interest" description="Disordered" evidence="2">
    <location>
        <begin position="431"/>
        <end position="458"/>
    </location>
</feature>
<feature type="compositionally biased region" description="Basic and acidic residues" evidence="2">
    <location>
        <begin position="375"/>
        <end position="396"/>
    </location>
</feature>
<feature type="compositionally biased region" description="Polar residues" evidence="2">
    <location>
        <begin position="443"/>
        <end position="458"/>
    </location>
</feature>
<organism>
    <name type="scientific">Arabidopsis thaliana</name>
    <name type="common">Mouse-ear cress</name>
    <dbReference type="NCBI Taxonomy" id="3702"/>
    <lineage>
        <taxon>Eukaryota</taxon>
        <taxon>Viridiplantae</taxon>
        <taxon>Streptophyta</taxon>
        <taxon>Embryophyta</taxon>
        <taxon>Tracheophyta</taxon>
        <taxon>Spermatophyta</taxon>
        <taxon>Magnoliopsida</taxon>
        <taxon>eudicotyledons</taxon>
        <taxon>Gunneridae</taxon>
        <taxon>Pentapetalae</taxon>
        <taxon>rosids</taxon>
        <taxon>malvids</taxon>
        <taxon>Brassicales</taxon>
        <taxon>Brassicaceae</taxon>
        <taxon>Camelineae</taxon>
        <taxon>Arabidopsis</taxon>
    </lineage>
</organism>
<comment type="function">
    <text evidence="1">May be involved in the transport of sterols.</text>
</comment>
<comment type="tissue specificity">
    <text evidence="3">Expressed in roots, leaves, stems and flowers.</text>
</comment>
<comment type="similarity">
    <text evidence="4">Belongs to the OSBP family.</text>
</comment>